<comment type="function">
    <text evidence="1">Single strand-specific metallo-endoribonuclease involved in late-stage 70S ribosome quality control and in maturation of the 3' terminus of the 16S rRNA.</text>
</comment>
<comment type="cofactor">
    <cofactor evidence="1">
        <name>Zn(2+)</name>
        <dbReference type="ChEBI" id="CHEBI:29105"/>
    </cofactor>
    <text evidence="1">Binds 1 zinc ion.</text>
</comment>
<comment type="subcellular location">
    <subcellularLocation>
        <location evidence="1">Cytoplasm</location>
    </subcellularLocation>
</comment>
<comment type="similarity">
    <text evidence="1">Belongs to the endoribonuclease YbeY family.</text>
</comment>
<keyword id="KW-0963">Cytoplasm</keyword>
<keyword id="KW-0255">Endonuclease</keyword>
<keyword id="KW-0378">Hydrolase</keyword>
<keyword id="KW-0479">Metal-binding</keyword>
<keyword id="KW-0540">Nuclease</keyword>
<keyword id="KW-0690">Ribosome biogenesis</keyword>
<keyword id="KW-0698">rRNA processing</keyword>
<keyword id="KW-0862">Zinc</keyword>
<feature type="chain" id="PRO_1000089229" description="Endoribonuclease YbeY">
    <location>
        <begin position="1"/>
        <end position="161"/>
    </location>
</feature>
<feature type="binding site" evidence="1">
    <location>
        <position position="121"/>
    </location>
    <ligand>
        <name>Zn(2+)</name>
        <dbReference type="ChEBI" id="CHEBI:29105"/>
        <note>catalytic</note>
    </ligand>
</feature>
<feature type="binding site" evidence="1">
    <location>
        <position position="125"/>
    </location>
    <ligand>
        <name>Zn(2+)</name>
        <dbReference type="ChEBI" id="CHEBI:29105"/>
        <note>catalytic</note>
    </ligand>
</feature>
<feature type="binding site" evidence="1">
    <location>
        <position position="131"/>
    </location>
    <ligand>
        <name>Zn(2+)</name>
        <dbReference type="ChEBI" id="CHEBI:29105"/>
        <note>catalytic</note>
    </ligand>
</feature>
<proteinExistence type="inferred from homology"/>
<dbReference type="EC" id="3.1.-.-" evidence="1"/>
<dbReference type="EMBL" id="CP001011">
    <property type="protein sequence ID" value="ACB93284.1"/>
    <property type="molecule type" value="Genomic_DNA"/>
</dbReference>
<dbReference type="RefSeq" id="WP_004089607.1">
    <property type="nucleotide sequence ID" value="NC_010577.1"/>
</dbReference>
<dbReference type="SMR" id="B2I8U3"/>
<dbReference type="GeneID" id="93905630"/>
<dbReference type="KEGG" id="xfn:XfasM23_1884"/>
<dbReference type="HOGENOM" id="CLU_106710_0_1_6"/>
<dbReference type="Proteomes" id="UP000001698">
    <property type="component" value="Chromosome"/>
</dbReference>
<dbReference type="GO" id="GO:0005737">
    <property type="term" value="C:cytoplasm"/>
    <property type="evidence" value="ECO:0007669"/>
    <property type="project" value="UniProtKB-SubCell"/>
</dbReference>
<dbReference type="GO" id="GO:0004222">
    <property type="term" value="F:metalloendopeptidase activity"/>
    <property type="evidence" value="ECO:0007669"/>
    <property type="project" value="InterPro"/>
</dbReference>
<dbReference type="GO" id="GO:0004521">
    <property type="term" value="F:RNA endonuclease activity"/>
    <property type="evidence" value="ECO:0007669"/>
    <property type="project" value="UniProtKB-UniRule"/>
</dbReference>
<dbReference type="GO" id="GO:0008270">
    <property type="term" value="F:zinc ion binding"/>
    <property type="evidence" value="ECO:0007669"/>
    <property type="project" value="UniProtKB-UniRule"/>
</dbReference>
<dbReference type="GO" id="GO:0006364">
    <property type="term" value="P:rRNA processing"/>
    <property type="evidence" value="ECO:0007669"/>
    <property type="project" value="UniProtKB-UniRule"/>
</dbReference>
<dbReference type="Gene3D" id="3.40.390.30">
    <property type="entry name" value="Metalloproteases ('zincins'), catalytic domain"/>
    <property type="match status" value="1"/>
</dbReference>
<dbReference type="HAMAP" id="MF_00009">
    <property type="entry name" value="Endoribonucl_YbeY"/>
    <property type="match status" value="1"/>
</dbReference>
<dbReference type="InterPro" id="IPR023091">
    <property type="entry name" value="MetalPrtase_cat_dom_sf_prd"/>
</dbReference>
<dbReference type="InterPro" id="IPR002036">
    <property type="entry name" value="YbeY"/>
</dbReference>
<dbReference type="InterPro" id="IPR020549">
    <property type="entry name" value="YbeY_CS"/>
</dbReference>
<dbReference type="NCBIfam" id="TIGR00043">
    <property type="entry name" value="rRNA maturation RNase YbeY"/>
    <property type="match status" value="1"/>
</dbReference>
<dbReference type="PANTHER" id="PTHR46986">
    <property type="entry name" value="ENDORIBONUCLEASE YBEY, CHLOROPLASTIC"/>
    <property type="match status" value="1"/>
</dbReference>
<dbReference type="PANTHER" id="PTHR46986:SF1">
    <property type="entry name" value="ENDORIBONUCLEASE YBEY, CHLOROPLASTIC"/>
    <property type="match status" value="1"/>
</dbReference>
<dbReference type="Pfam" id="PF02130">
    <property type="entry name" value="YbeY"/>
    <property type="match status" value="1"/>
</dbReference>
<dbReference type="SUPFAM" id="SSF55486">
    <property type="entry name" value="Metalloproteases ('zincins'), catalytic domain"/>
    <property type="match status" value="1"/>
</dbReference>
<dbReference type="PROSITE" id="PS01306">
    <property type="entry name" value="UPF0054"/>
    <property type="match status" value="1"/>
</dbReference>
<name>YBEY_XYLF2</name>
<protein>
    <recommendedName>
        <fullName evidence="1">Endoribonuclease YbeY</fullName>
        <ecNumber evidence="1">3.1.-.-</ecNumber>
    </recommendedName>
</protein>
<accession>B2I8U3</accession>
<reference key="1">
    <citation type="journal article" date="2010" name="J. Bacteriol.">
        <title>Whole genome sequences of two Xylella fastidiosa strains (M12 and M23) causing almond leaf scorch disease in California.</title>
        <authorList>
            <person name="Chen J."/>
            <person name="Xie G."/>
            <person name="Han S."/>
            <person name="Chertkov O."/>
            <person name="Sims D."/>
            <person name="Civerolo E.L."/>
        </authorList>
    </citation>
    <scope>NUCLEOTIDE SEQUENCE [LARGE SCALE GENOMIC DNA]</scope>
    <source>
        <strain>M23</strain>
    </source>
</reference>
<sequence length="161" mass="18013">MTRGPIFLNVGISYGLPRTKLPAAVSFRKWVAATLQGRIRKADLAIRIVDEKEGRALNYHYRNKDYATNVLSFPAQLPEPFPKALKIPLLGDIVMCAPVIAREATEQGKSLSAHYAHLTVHGTLHLLGWNHEDHQEADAMEQLEREILANLGISDPYLGEY</sequence>
<evidence type="ECO:0000255" key="1">
    <source>
        <dbReference type="HAMAP-Rule" id="MF_00009"/>
    </source>
</evidence>
<organism>
    <name type="scientific">Xylella fastidiosa (strain M23)</name>
    <dbReference type="NCBI Taxonomy" id="405441"/>
    <lineage>
        <taxon>Bacteria</taxon>
        <taxon>Pseudomonadati</taxon>
        <taxon>Pseudomonadota</taxon>
        <taxon>Gammaproteobacteria</taxon>
        <taxon>Lysobacterales</taxon>
        <taxon>Lysobacteraceae</taxon>
        <taxon>Xylella</taxon>
    </lineage>
</organism>
<gene>
    <name evidence="1" type="primary">ybeY</name>
    <name type="ordered locus">XfasM23_1884</name>
</gene>